<proteinExistence type="inferred from homology"/>
<evidence type="ECO:0000255" key="1">
    <source>
        <dbReference type="HAMAP-Rule" id="MF_01077"/>
    </source>
</evidence>
<accession>P67217</accession>
<accession>Q9JR05</accession>
<dbReference type="EMBL" id="AE002098">
    <property type="protein sequence ID" value="AAF41990.1"/>
    <property type="molecule type" value="Genomic_DNA"/>
</dbReference>
<dbReference type="PIR" id="A81060">
    <property type="entry name" value="A81060"/>
</dbReference>
<dbReference type="RefSeq" id="NP_274646.1">
    <property type="nucleotide sequence ID" value="NC_003112.2"/>
</dbReference>
<dbReference type="SMR" id="P67217"/>
<dbReference type="FunCoup" id="P67217">
    <property type="interactions" value="331"/>
</dbReference>
<dbReference type="STRING" id="122586.NMB1641"/>
<dbReference type="PaxDb" id="122586-NMB1641"/>
<dbReference type="KEGG" id="nme:NMB1641"/>
<dbReference type="PATRIC" id="fig|122586.8.peg.2113"/>
<dbReference type="HOGENOM" id="CLU_070525_1_0_4"/>
<dbReference type="InParanoid" id="P67217"/>
<dbReference type="OrthoDB" id="9805006at2"/>
<dbReference type="Proteomes" id="UP000000425">
    <property type="component" value="Chromosome"/>
</dbReference>
<dbReference type="GO" id="GO:0005829">
    <property type="term" value="C:cytosol"/>
    <property type="evidence" value="ECO:0000318"/>
    <property type="project" value="GO_Central"/>
</dbReference>
<dbReference type="GO" id="GO:0000028">
    <property type="term" value="P:ribosomal small subunit assembly"/>
    <property type="evidence" value="ECO:0000318"/>
    <property type="project" value="GO_Central"/>
</dbReference>
<dbReference type="GO" id="GO:0006412">
    <property type="term" value="P:translation"/>
    <property type="evidence" value="ECO:0000318"/>
    <property type="project" value="GO_Central"/>
</dbReference>
<dbReference type="CDD" id="cd01734">
    <property type="entry name" value="YlxS_C"/>
    <property type="match status" value="1"/>
</dbReference>
<dbReference type="FunFam" id="2.30.30.180:FF:000005">
    <property type="entry name" value="Ribosome maturation factor RimP"/>
    <property type="match status" value="1"/>
</dbReference>
<dbReference type="FunFam" id="3.30.300.70:FF:000008">
    <property type="entry name" value="Ribosome maturation factor RimP"/>
    <property type="match status" value="1"/>
</dbReference>
<dbReference type="Gene3D" id="2.30.30.180">
    <property type="entry name" value="Ribosome maturation factor RimP, C-terminal domain"/>
    <property type="match status" value="1"/>
</dbReference>
<dbReference type="Gene3D" id="3.30.300.70">
    <property type="entry name" value="RimP-like superfamily, N-terminal"/>
    <property type="match status" value="1"/>
</dbReference>
<dbReference type="HAMAP" id="MF_01077">
    <property type="entry name" value="RimP"/>
    <property type="match status" value="1"/>
</dbReference>
<dbReference type="InterPro" id="IPR003728">
    <property type="entry name" value="Ribosome_maturation_RimP"/>
</dbReference>
<dbReference type="InterPro" id="IPR028998">
    <property type="entry name" value="RimP_C"/>
</dbReference>
<dbReference type="InterPro" id="IPR036847">
    <property type="entry name" value="RimP_C_sf"/>
</dbReference>
<dbReference type="InterPro" id="IPR028989">
    <property type="entry name" value="RimP_N"/>
</dbReference>
<dbReference type="InterPro" id="IPR035956">
    <property type="entry name" value="RimP_N_sf"/>
</dbReference>
<dbReference type="NCBIfam" id="NF000929">
    <property type="entry name" value="PRK00092.2-1"/>
    <property type="match status" value="1"/>
</dbReference>
<dbReference type="PANTHER" id="PTHR33867">
    <property type="entry name" value="RIBOSOME MATURATION FACTOR RIMP"/>
    <property type="match status" value="1"/>
</dbReference>
<dbReference type="PANTHER" id="PTHR33867:SF1">
    <property type="entry name" value="RIBOSOME MATURATION FACTOR RIMP"/>
    <property type="match status" value="1"/>
</dbReference>
<dbReference type="Pfam" id="PF17384">
    <property type="entry name" value="DUF150_C"/>
    <property type="match status" value="1"/>
</dbReference>
<dbReference type="Pfam" id="PF02576">
    <property type="entry name" value="RimP_N"/>
    <property type="match status" value="1"/>
</dbReference>
<dbReference type="SUPFAM" id="SSF74942">
    <property type="entry name" value="YhbC-like, C-terminal domain"/>
    <property type="match status" value="1"/>
</dbReference>
<dbReference type="SUPFAM" id="SSF75420">
    <property type="entry name" value="YhbC-like, N-terminal domain"/>
    <property type="match status" value="1"/>
</dbReference>
<comment type="function">
    <text evidence="1">Required for maturation of 30S ribosomal subunits.</text>
</comment>
<comment type="subcellular location">
    <subcellularLocation>
        <location evidence="1">Cytoplasm</location>
    </subcellularLocation>
</comment>
<comment type="similarity">
    <text evidence="1">Belongs to the RimP family.</text>
</comment>
<reference key="1">
    <citation type="journal article" date="2000" name="Science">
        <title>Complete genome sequence of Neisseria meningitidis serogroup B strain MC58.</title>
        <authorList>
            <person name="Tettelin H."/>
            <person name="Saunders N.J."/>
            <person name="Heidelberg J.F."/>
            <person name="Jeffries A.C."/>
            <person name="Nelson K.E."/>
            <person name="Eisen J.A."/>
            <person name="Ketchum K.A."/>
            <person name="Hood D.W."/>
            <person name="Peden J.F."/>
            <person name="Dodson R.J."/>
            <person name="Nelson W.C."/>
            <person name="Gwinn M.L."/>
            <person name="DeBoy R.T."/>
            <person name="Peterson J.D."/>
            <person name="Hickey E.K."/>
            <person name="Haft D.H."/>
            <person name="Salzberg S.L."/>
            <person name="White O."/>
            <person name="Fleischmann R.D."/>
            <person name="Dougherty B.A."/>
            <person name="Mason T.M."/>
            <person name="Ciecko A."/>
            <person name="Parksey D.S."/>
            <person name="Blair E."/>
            <person name="Cittone H."/>
            <person name="Clark E.B."/>
            <person name="Cotton M.D."/>
            <person name="Utterback T.R."/>
            <person name="Khouri H.M."/>
            <person name="Qin H."/>
            <person name="Vamathevan J.J."/>
            <person name="Gill J."/>
            <person name="Scarlato V."/>
            <person name="Masignani V."/>
            <person name="Pizza M."/>
            <person name="Grandi G."/>
            <person name="Sun L."/>
            <person name="Smith H.O."/>
            <person name="Fraser C.M."/>
            <person name="Moxon E.R."/>
            <person name="Rappuoli R."/>
            <person name="Venter J.C."/>
        </authorList>
    </citation>
    <scope>NUCLEOTIDE SEQUENCE [LARGE SCALE GENOMIC DNA]</scope>
    <source>
        <strain>ATCC BAA-335 / MC58</strain>
    </source>
</reference>
<name>RIMP_NEIMB</name>
<sequence length="149" mass="16636">MYIGSSMDIQTILEKTLPGLGYELVDFELTAQGTLRVFIDKESGITVEDCATVSNHLSRVFMVEDIDYKNLEISSPGLDRPLKKAADFVRFAGQNAKIKTRLPIDGQKNFIGKIEGCENDTVTVSFDGKTVQIELGNIDKARLRPEFKF</sequence>
<feature type="chain" id="PRO_0000181895" description="Ribosome maturation factor RimP">
    <location>
        <begin position="1"/>
        <end position="149"/>
    </location>
</feature>
<gene>
    <name evidence="1" type="primary">rimP</name>
    <name type="ordered locus">NMB1641</name>
</gene>
<protein>
    <recommendedName>
        <fullName evidence="1">Ribosome maturation factor RimP</fullName>
    </recommendedName>
</protein>
<organism>
    <name type="scientific">Neisseria meningitidis serogroup B (strain ATCC BAA-335 / MC58)</name>
    <dbReference type="NCBI Taxonomy" id="122586"/>
    <lineage>
        <taxon>Bacteria</taxon>
        <taxon>Pseudomonadati</taxon>
        <taxon>Pseudomonadota</taxon>
        <taxon>Betaproteobacteria</taxon>
        <taxon>Neisseriales</taxon>
        <taxon>Neisseriaceae</taxon>
        <taxon>Neisseria</taxon>
    </lineage>
</organism>
<keyword id="KW-0963">Cytoplasm</keyword>
<keyword id="KW-1185">Reference proteome</keyword>
<keyword id="KW-0690">Ribosome biogenesis</keyword>